<protein>
    <recommendedName>
        <fullName evidence="4">Mu-theraphotoxin-Ssp1a</fullName>
        <shortName evidence="4">Mu-TRTX-Ssp1a</shortName>
    </recommendedName>
    <alternativeName>
        <fullName evidence="3">Ssp1a</fullName>
    </alternativeName>
</protein>
<keyword id="KW-0002">3D-structure</keyword>
<keyword id="KW-0027">Amidation</keyword>
<keyword id="KW-0903">Direct protein sequencing</keyword>
<keyword id="KW-1015">Disulfide bond</keyword>
<keyword id="KW-0872">Ion channel impairing toxin</keyword>
<keyword id="KW-0960">Knottin</keyword>
<keyword id="KW-0528">Neurotoxin</keyword>
<keyword id="KW-0964">Secreted</keyword>
<keyword id="KW-0800">Toxin</keyword>
<keyword id="KW-0738">Voltage-gated sodium channel impairing toxin</keyword>
<name>TX1A_SELSX</name>
<feature type="chain" id="PRO_0000462458" description="Mu-theraphotoxin-Ssp1a" evidence="1">
    <location>
        <begin position="1"/>
        <end position="33"/>
    </location>
</feature>
<feature type="site" description="Pharmacophore key residue" evidence="2">
    <location>
        <position position="28"/>
    </location>
</feature>
<feature type="site" description="Pharmacophore key residue" evidence="2">
    <location>
        <position position="30"/>
    </location>
</feature>
<feature type="modified residue" description="Leucine amide" evidence="1">
    <location>
        <position position="33"/>
    </location>
</feature>
<feature type="disulfide bond" evidence="1 6">
    <location>
        <begin position="2"/>
        <end position="17"/>
    </location>
</feature>
<feature type="disulfide bond" evidence="1 6">
    <location>
        <begin position="9"/>
        <end position="22"/>
    </location>
</feature>
<feature type="disulfide bond" evidence="1 6">
    <location>
        <begin position="16"/>
        <end position="29"/>
    </location>
</feature>
<feature type="mutagenesis site" description="Slight increase in potency towards Nav1.2, no change towards Nav1.3 and Nav1.7." evidence="2">
    <original>L</original>
    <variation>A</variation>
    <location>
        <position position="3"/>
    </location>
</feature>
<feature type="mutagenesis site" description="Important decrease in potency towards Nav1.2, Nav1.3 and Nav1.7." evidence="2">
    <original>W</original>
    <variation>A</variation>
    <location>
        <position position="5"/>
    </location>
</feature>
<feature type="mutagenesis site" description="Important decrease in potency towards Nav1.2, Nav1.3 and Nav1.7." evidence="2">
    <original>F</original>
    <variation>A</variation>
    <location>
        <position position="6"/>
    </location>
</feature>
<feature type="mutagenesis site" description="Increase of inhibitory potency towards Nav1.2, Nav1.3 and Nav1.7, generating a non-selective inhibitor with nanomolar potency at the three Nav subtypes; when associated with K-18." evidence="2">
    <original>S</original>
    <variation>R</variation>
    <location>
        <position position="7"/>
    </location>
</feature>
<feature type="mutagenesis site" description="No change in potency towards Nav1.2, Nav1.3, and Nav1.7." evidence="2">
    <original>P</original>
    <variation>A</variation>
    <location>
        <position position="11"/>
    </location>
</feature>
<feature type="mutagenesis site" description="Slight decrease in potency towards Nav1.2, no change towards Nav1.3 and Nav1.7." evidence="2">
    <original>N</original>
    <variation>A</variation>
    <location>
        <position position="14"/>
    </location>
</feature>
<feature type="mutagenesis site" description="Increase of Nav1.2/Nav1.7 selectivity over Nav1.3; when associated with R-27." evidence="2">
    <original>N</original>
    <variation>D</variation>
    <location>
        <position position="14"/>
    </location>
</feature>
<feature type="mutagenesis site" description="Increase of inhibitory potency towards Nav1.2, Nav1.3 and Nav1.7, generating a non-selective inhibitor with nanomolar potency at the three Nav subtypes; when associated with R-18." evidence="2">
    <original>E</original>
    <variation>K</variation>
    <location>
        <position position="18"/>
    </location>
</feature>
<feature type="mutagenesis site" description="Loss of potency towards Nav1.3, and important decrease (10-fold) of potency towards Nav1.2 and Nav1.7." evidence="2">
    <original>Y</original>
    <variation>A</variation>
    <location>
        <position position="20"/>
    </location>
</feature>
<feature type="mutagenesis site" description="Important decrease in potency towards Nav1.2, Nav1.3 and Nav1.7." evidence="2">
    <original>W</original>
    <variation>A</variation>
    <location>
        <position position="24"/>
    </location>
</feature>
<feature type="mutagenesis site" description="Important decrease in potency towards Nav1.2, Nav1.3 and Nav1.7." evidence="2">
    <original>K</original>
    <variation>A</variation>
    <location>
        <position position="25"/>
    </location>
</feature>
<feature type="mutagenesis site" description="Important decrease in potency towards Nav1.2, Nav1.3 and Nav1.7." evidence="2">
    <original>Y</original>
    <variation>A</variation>
    <location>
        <position position="26"/>
    </location>
</feature>
<feature type="mutagenesis site" description="Decrease in potency towards Nav1.3, no change towards Nav1.2 and Nav1.7." evidence="2">
    <original>P</original>
    <variation>A</variation>
    <location>
        <position position="27"/>
    </location>
</feature>
<feature type="mutagenesis site" description="Increase of Nav1.2/Nav1.7 selectivity over Nav1.3; when associated with D-14." evidence="2">
    <original>P</original>
    <variation>R</variation>
    <location>
        <position position="27"/>
    </location>
</feature>
<feature type="mutagenesis site" description="Loss of potency towards Nav1.2, Nav1.3 and Nav1.7." evidence="2">
    <original>W</original>
    <variation>A</variation>
    <location>
        <position position="28"/>
    </location>
</feature>
<feature type="mutagenesis site" description="Important decrease in potency towards Nav1.2, Nav1.3 and Nav1.7." evidence="2">
    <original>R</original>
    <variation>A</variation>
    <location>
        <position position="30"/>
    </location>
</feature>
<feature type="mutagenesis site" description="Important decrease in potency towards Nav1.2 and Nav1.3, slight decrease towards Nav1.7." evidence="2">
    <original>Y</original>
    <variation>A</variation>
    <location>
        <position position="31"/>
    </location>
</feature>
<feature type="mutagenesis site" description="Slight increase in potency towards Nav1.2 and Nav1.3, no change towards Nav1.7." evidence="2">
    <original>D</original>
    <variation>A</variation>
    <location>
        <position position="32"/>
    </location>
</feature>
<feature type="mutagenesis site" description="Loss of potency toward Nav1.3, slight decrease in potency towards Nav1.7, and no change towards Nav1.2." evidence="2">
    <original>L</original>
    <variation>A</variation>
    <location>
        <position position="33"/>
    </location>
</feature>
<dbReference type="PDB" id="7SKC">
    <property type="method" value="NMR"/>
    <property type="chains" value="A=1-33"/>
</dbReference>
<dbReference type="PDBsum" id="7SKC"/>
<sequence length="33" mass="3976">DCLGWFSGCDPNNNKCCEGYVCHWKYPWCRYDL</sequence>
<comment type="function">
    <text evidence="1 2">Gating modifier toxin that traps voltage-sensing domain II of voltage-gated sodium channels in the resting state without significantly altering the voltage-dependence of activation and inactivation, or delay in recovery from inactivation (PubMed:35002728). Inhibits hNav1.7/SCN9A (IC(50)=134 nM), followed in rank order of potency by Nav1.6/SCN8A (IC(50)=191 nM), Nav1.2/SCN2A (IC(50)=239 nM), Nav1.3/SCN3A (IC(50)=547 nM) and Nav1.1/SCN1A (IC(50)=674 nM) (PubMed:35002728). Its binding to Nav1.2, Nav1.3 and Nav1.7 is slowly reversible and incomplete, with ~25% of Nav1.2, ~50% of Nav1.3 and ~40% of Nav1.7 channels recovering from block after a 30 minutes washout, respectively (PubMed:35002728). Binds in the aqueous cleft formed between the S1-S2 and S3-S4 loops of each channel subtype, primarily targeting the S3-S4 loop (PubMed:38034993).</text>
</comment>
<comment type="subcellular location">
    <subcellularLocation>
        <location evidence="1">Secreted</location>
    </subcellularLocation>
</comment>
<comment type="tissue specificity">
    <text evidence="5">Expressed by the venom gland.</text>
</comment>
<comment type="domain">
    <text evidence="1">The presence of a 'disulfide through disulfide knot' structurally defines this protein as a knottin.</text>
</comment>
<comment type="mass spectrometry" mass="3966.56" method="MALDI" evidence="1">
    <text>Monoisotopic mass.</text>
</comment>
<comment type="miscellaneous">
    <text evidence="1">Negative results: shows very weak inhibitory activity against hNav1.5/SCN5A (~60% block at 3 uM), hNav1.4/SCN4A and hNav1.8/SCN10A.</text>
</comment>
<comment type="similarity">
    <text evidence="4">Belongs to the neurotoxin 10 (Hwtx-1) family. 22 (Htx-4) subfamily.</text>
</comment>
<evidence type="ECO:0000269" key="1">
    <source>
    </source>
</evidence>
<evidence type="ECO:0000269" key="2">
    <source>
    </source>
</evidence>
<evidence type="ECO:0000303" key="3">
    <source>
    </source>
</evidence>
<evidence type="ECO:0000305" key="4"/>
<evidence type="ECO:0000305" key="5">
    <source>
    </source>
</evidence>
<evidence type="ECO:0007744" key="6">
    <source>
        <dbReference type="PDB" id="7SKC"/>
    </source>
</evidence>
<accession>P0DRJ2</accession>
<reference key="1">
    <citation type="journal article" date="2021" name="Front. Pharmacol.">
        <title>Voltage-gated sodium channel modulation by a new spider toxin Ssp1a isolated from an Australian Theraphosid.</title>
        <authorList>
            <person name="Dongol Y."/>
            <person name="Choi P.M."/>
            <person name="Wilson D.T."/>
            <person name="Daly N.L."/>
            <person name="Cardoso F.C."/>
            <person name="Lewis R.J."/>
        </authorList>
    </citation>
    <scope>PROTEIN SEQUENCE</scope>
    <scope>FUNCTION</scope>
    <scope>STRUCTURE BY NMR</scope>
    <scope>AMIDATION AT LEU-33</scope>
    <scope>MASS SPECTROMETRY</scope>
    <scope>RECOMBINANT EXPRESSION</scope>
    <scope>SUBCELLULAR LOCATION</scope>
    <scope>MOLECULAR DOCKING</scope>
    <source>
        <tissue>Venom</tissue>
    </source>
</reference>
<reference key="2">
    <citation type="journal article" date="2023" name="Front. Pharmacol.">
        <title>Structure-function and rational design of a spider toxin Ssp1a at human voltage-gated sodium channel subtypes.</title>
        <authorList>
            <person name="Dongol Y."/>
            <person name="Wilson D.T."/>
            <person name="Daly N.L."/>
            <person name="Cardoso F.C."/>
            <person name="Lewis R.J."/>
        </authorList>
    </citation>
    <scope>MUTAGENESIS OF LEU-3; TRP-5; PHE-6; SER-7; PRO-11; ASN-14; GLU-18; TYR-20; TRP-24; LYS-25; TYR-26; PRO-27; TRP-28; ARG-30; TYR-31; ASP-32 AND LEU-33</scope>
    <scope>ALANINE-SCANNING MUTAGENESIS</scope>
    <scope>RECOMBINANT EXPRESSION</scope>
    <scope>MOLECULAR DOCKING</scope>
</reference>
<organism>
    <name type="scientific">Selenotypus sp.</name>
    <name type="common">Feather-legged tarantula</name>
    <dbReference type="NCBI Taxonomy" id="3400313"/>
    <lineage>
        <taxon>Eukaryota</taxon>
        <taxon>Metazoa</taxon>
        <taxon>Ecdysozoa</taxon>
        <taxon>Arthropoda</taxon>
        <taxon>Chelicerata</taxon>
        <taxon>Arachnida</taxon>
        <taxon>Araneae</taxon>
        <taxon>Mygalomorphae</taxon>
        <taxon>Theraphosidae</taxon>
        <taxon>Selenotypus</taxon>
    </lineage>
</organism>
<proteinExistence type="evidence at protein level"/>